<dbReference type="EMBL" id="L09189">
    <property type="protein sequence ID" value="AAC37046.1"/>
    <property type="molecule type" value="Genomic_DNA"/>
</dbReference>
<dbReference type="EMBL" id="AE002098">
    <property type="protein sequence ID" value="AAF40542.1"/>
    <property type="molecule type" value="Genomic_DNA"/>
</dbReference>
<dbReference type="PIR" id="A81242">
    <property type="entry name" value="A81242"/>
</dbReference>
<dbReference type="RefSeq" id="NP_273139.1">
    <property type="nucleotide sequence ID" value="NC_003112.2"/>
</dbReference>
<dbReference type="RefSeq" id="WP_002224749.1">
    <property type="nucleotide sequence ID" value="NC_003112.2"/>
</dbReference>
<dbReference type="SMR" id="Q51152"/>
<dbReference type="FunCoup" id="Q51152">
    <property type="interactions" value="386"/>
</dbReference>
<dbReference type="STRING" id="122586.NMB0075"/>
<dbReference type="PaxDb" id="122586-NMB0075"/>
<dbReference type="KEGG" id="nme:NMB0075"/>
<dbReference type="PATRIC" id="fig|122586.8.peg.109"/>
<dbReference type="HOGENOM" id="CLU_009833_0_2_4"/>
<dbReference type="InParanoid" id="Q51152"/>
<dbReference type="OrthoDB" id="9804714at2"/>
<dbReference type="Proteomes" id="UP000000425">
    <property type="component" value="Chromosome"/>
</dbReference>
<dbReference type="GO" id="GO:0005829">
    <property type="term" value="C:cytosol"/>
    <property type="evidence" value="ECO:0000318"/>
    <property type="project" value="GO_Central"/>
</dbReference>
<dbReference type="GO" id="GO:0003729">
    <property type="term" value="F:mRNA binding"/>
    <property type="evidence" value="ECO:0000318"/>
    <property type="project" value="GO_Central"/>
</dbReference>
<dbReference type="GO" id="GO:0003735">
    <property type="term" value="F:structural constituent of ribosome"/>
    <property type="evidence" value="ECO:0000318"/>
    <property type="project" value="GO_Central"/>
</dbReference>
<dbReference type="GO" id="GO:0006139">
    <property type="term" value="P:nucleobase-containing compound metabolic process"/>
    <property type="evidence" value="ECO:0007669"/>
    <property type="project" value="InterPro"/>
</dbReference>
<dbReference type="GO" id="GO:0006412">
    <property type="term" value="P:translation"/>
    <property type="evidence" value="ECO:0000318"/>
    <property type="project" value="GO_Central"/>
</dbReference>
<dbReference type="CDD" id="cd05685">
    <property type="entry name" value="S1_Tex"/>
    <property type="match status" value="1"/>
</dbReference>
<dbReference type="FunFam" id="1.10.150.310:FF:000001">
    <property type="entry name" value="RNA-binding transcriptional accessory protein"/>
    <property type="match status" value="1"/>
</dbReference>
<dbReference type="FunFam" id="2.40.50.140:FF:000051">
    <property type="entry name" value="RNA-binding transcriptional accessory protein"/>
    <property type="match status" value="1"/>
</dbReference>
<dbReference type="FunFam" id="3.30.420.140:FF:000001">
    <property type="entry name" value="RNA-binding transcriptional accessory protein"/>
    <property type="match status" value="1"/>
</dbReference>
<dbReference type="FunFam" id="1.10.10.650:FF:000001">
    <property type="entry name" value="S1 RNA-binding domain 1"/>
    <property type="match status" value="1"/>
</dbReference>
<dbReference type="Gene3D" id="2.40.50.140">
    <property type="entry name" value="Nucleic acid-binding proteins"/>
    <property type="match status" value="1"/>
</dbReference>
<dbReference type="Gene3D" id="1.10.10.650">
    <property type="entry name" value="RuvA domain 2-like"/>
    <property type="match status" value="1"/>
</dbReference>
<dbReference type="Gene3D" id="1.10.3500.10">
    <property type="entry name" value="Tex N-terminal region-like"/>
    <property type="match status" value="1"/>
</dbReference>
<dbReference type="Gene3D" id="1.10.150.310">
    <property type="entry name" value="Tex RuvX-like domain-like"/>
    <property type="match status" value="1"/>
</dbReference>
<dbReference type="Gene3D" id="3.30.420.140">
    <property type="entry name" value="YqgF/RNase H-like domain"/>
    <property type="match status" value="1"/>
</dbReference>
<dbReference type="InterPro" id="IPR041692">
    <property type="entry name" value="HHH_9"/>
</dbReference>
<dbReference type="InterPro" id="IPR012340">
    <property type="entry name" value="NA-bd_OB-fold"/>
</dbReference>
<dbReference type="InterPro" id="IPR050437">
    <property type="entry name" value="Ribos_protein_bS1-like"/>
</dbReference>
<dbReference type="InterPro" id="IPR012337">
    <property type="entry name" value="RNaseH-like_sf"/>
</dbReference>
<dbReference type="InterPro" id="IPR010994">
    <property type="entry name" value="RuvA_2-like"/>
</dbReference>
<dbReference type="InterPro" id="IPR003029">
    <property type="entry name" value="S1_domain"/>
</dbReference>
<dbReference type="InterPro" id="IPR044146">
    <property type="entry name" value="S1_Tex"/>
</dbReference>
<dbReference type="InterPro" id="IPR055179">
    <property type="entry name" value="Tex-like_central_region"/>
</dbReference>
<dbReference type="InterPro" id="IPR023323">
    <property type="entry name" value="Tex-like_dom_sf"/>
</dbReference>
<dbReference type="InterPro" id="IPR023319">
    <property type="entry name" value="Tex-like_HTH_dom_sf"/>
</dbReference>
<dbReference type="InterPro" id="IPR018974">
    <property type="entry name" value="Tex-like_N"/>
</dbReference>
<dbReference type="InterPro" id="IPR032639">
    <property type="entry name" value="Tex_YqgF"/>
</dbReference>
<dbReference type="InterPro" id="IPR006641">
    <property type="entry name" value="YqgF/RNaseH-like_dom"/>
</dbReference>
<dbReference type="InterPro" id="IPR037027">
    <property type="entry name" value="YqgF/RNaseH-like_dom_sf"/>
</dbReference>
<dbReference type="PANTHER" id="PTHR10724">
    <property type="entry name" value="30S RIBOSOMAL PROTEIN S1"/>
    <property type="match status" value="1"/>
</dbReference>
<dbReference type="PANTHER" id="PTHR10724:SF10">
    <property type="entry name" value="S1 RNA-BINDING DOMAIN-CONTAINING PROTEIN 1"/>
    <property type="match status" value="1"/>
</dbReference>
<dbReference type="Pfam" id="PF12836">
    <property type="entry name" value="HHH_3"/>
    <property type="match status" value="1"/>
</dbReference>
<dbReference type="Pfam" id="PF17674">
    <property type="entry name" value="HHH_9"/>
    <property type="match status" value="1"/>
</dbReference>
<dbReference type="Pfam" id="PF00575">
    <property type="entry name" value="S1"/>
    <property type="match status" value="1"/>
</dbReference>
<dbReference type="Pfam" id="PF22706">
    <property type="entry name" value="Tex_central_region"/>
    <property type="match status" value="1"/>
</dbReference>
<dbReference type="Pfam" id="PF09371">
    <property type="entry name" value="Tex_N"/>
    <property type="match status" value="1"/>
</dbReference>
<dbReference type="Pfam" id="PF16921">
    <property type="entry name" value="Tex_YqgF"/>
    <property type="match status" value="1"/>
</dbReference>
<dbReference type="SMART" id="SM00316">
    <property type="entry name" value="S1"/>
    <property type="match status" value="1"/>
</dbReference>
<dbReference type="SMART" id="SM00732">
    <property type="entry name" value="YqgFc"/>
    <property type="match status" value="1"/>
</dbReference>
<dbReference type="SUPFAM" id="SSF50249">
    <property type="entry name" value="Nucleic acid-binding proteins"/>
    <property type="match status" value="1"/>
</dbReference>
<dbReference type="SUPFAM" id="SSF53098">
    <property type="entry name" value="Ribonuclease H-like"/>
    <property type="match status" value="1"/>
</dbReference>
<dbReference type="SUPFAM" id="SSF47781">
    <property type="entry name" value="RuvA domain 2-like"/>
    <property type="match status" value="2"/>
</dbReference>
<dbReference type="SUPFAM" id="SSF158832">
    <property type="entry name" value="Tex N-terminal region-like"/>
    <property type="match status" value="1"/>
</dbReference>
<dbReference type="PROSITE" id="PS50126">
    <property type="entry name" value="S1"/>
    <property type="match status" value="1"/>
</dbReference>
<feature type="chain" id="PRO_0000215108" description="Uncharacterized protein NMB0075">
    <location>
        <begin position="1"/>
        <end position="757"/>
    </location>
</feature>
<feature type="domain" description="S1 motif" evidence="1">
    <location>
        <begin position="640"/>
        <end position="709"/>
    </location>
</feature>
<feature type="region of interest" description="Disordered" evidence="2">
    <location>
        <begin position="711"/>
        <end position="757"/>
    </location>
</feature>
<feature type="compositionally biased region" description="Basic and acidic residues" evidence="2">
    <location>
        <begin position="711"/>
        <end position="741"/>
    </location>
</feature>
<feature type="sequence conflict" description="In Ref. 1; AAC37046." evidence="3" ref="1">
    <original>WL</original>
    <variation>CV</variation>
    <location>
        <begin position="265"/>
        <end position="266"/>
    </location>
</feature>
<gene>
    <name type="ordered locus">NMB0075</name>
</gene>
<proteinExistence type="predicted"/>
<organism>
    <name type="scientific">Neisseria meningitidis serogroup B (strain ATCC BAA-335 / MC58)</name>
    <dbReference type="NCBI Taxonomy" id="122586"/>
    <lineage>
        <taxon>Bacteria</taxon>
        <taxon>Pseudomonadati</taxon>
        <taxon>Pseudomonadota</taxon>
        <taxon>Betaproteobacteria</taxon>
        <taxon>Neisseriales</taxon>
        <taxon>Neisseriaceae</taxon>
        <taxon>Neisseria</taxon>
    </lineage>
</organism>
<sequence>MNITQILSQELSATAAQITAAVELLDDGATVPFIARYRKEATGGLDDTQLRRLAERLQYLRELEERKAVVLKSIEEQGKLSDDLRAQIEAADNKTALEDLYLPYKPKRRTKAQIAREHGLQPLADVLLAEQSQDVEAAAQGYLNENVPDAKAALDGARAILMEQFAEDAELIGTLRDKLWNEAEIHAQVVEGKETEGEKFSDYFDHREPVRTMPSHRALAVLRGRNEGVLNIALKYQPDDTPITRQSEYEQIIACRFKVSDGHKWLRDTVRLTWRAKIFLSLELEALGRLKEAADTDAITVFARNLKDLLLVAPAGRLTTLGLDPGYRNGVKCAVVDDTGKLLDTVIVYLHQENNMLATLSRLIKQHGVKLIAIGNGTASRETDKIAGELVRGMPEMGLHKIVVSEAGASIYSASELAAREFPDLDVSLRGAVSIARRLQDPLAELVKIDPKSIGVGQYQHDVNQNQLAKSLDAVVEDCVNAVGVDVNTASAPLLARISGLNQTLAQNIVAYRDENGAFDSRKKLLKVPRLGEKTFEQAAGFLRINGGKEPLDASAVHPEAYPVVAKMLAQQGISAAELIGNRERVKQIKASDFTDERFGLPTILDILSELEKPGRDPRGEFQTASFAEGIHEISDLQVGMILEGVVSNVANFGAFVDIGVHQDGLVHISALSNKFVQDPREVVKAGDVVKVKVLEVDAARKRIALTMRLDDEPGGAKHKMPSENRSRERTAGRKPQRNDRAPANSAMADAFAKLKR</sequence>
<accession>Q51152</accession>
<name>YHGF_NEIMB</name>
<keyword id="KW-1185">Reference proteome</keyword>
<keyword id="KW-0694">RNA-binding</keyword>
<reference key="1">
    <citation type="journal article" date="1996" name="J. Bacteriol.">
        <title>Genes associated with meningococcal capsule complex are also found in Neisseria gonorrhoeae.</title>
        <authorList>
            <person name="Petering H."/>
            <person name="Hammerschmidt S."/>
            <person name="Frosch M."/>
            <person name="van Putten J.P.M."/>
            <person name="Ison C.A."/>
            <person name="Robertson B.D."/>
        </authorList>
    </citation>
    <scope>NUCLEOTIDE SEQUENCE [GENOMIC DNA]</scope>
    <source>
        <strain>B1940 / Serogroup B</strain>
    </source>
</reference>
<reference key="2">
    <citation type="journal article" date="2000" name="Science">
        <title>Complete genome sequence of Neisseria meningitidis serogroup B strain MC58.</title>
        <authorList>
            <person name="Tettelin H."/>
            <person name="Saunders N.J."/>
            <person name="Heidelberg J.F."/>
            <person name="Jeffries A.C."/>
            <person name="Nelson K.E."/>
            <person name="Eisen J.A."/>
            <person name="Ketchum K.A."/>
            <person name="Hood D.W."/>
            <person name="Peden J.F."/>
            <person name="Dodson R.J."/>
            <person name="Nelson W.C."/>
            <person name="Gwinn M.L."/>
            <person name="DeBoy R.T."/>
            <person name="Peterson J.D."/>
            <person name="Hickey E.K."/>
            <person name="Haft D.H."/>
            <person name="Salzberg S.L."/>
            <person name="White O."/>
            <person name="Fleischmann R.D."/>
            <person name="Dougherty B.A."/>
            <person name="Mason T.M."/>
            <person name="Ciecko A."/>
            <person name="Parksey D.S."/>
            <person name="Blair E."/>
            <person name="Cittone H."/>
            <person name="Clark E.B."/>
            <person name="Cotton M.D."/>
            <person name="Utterback T.R."/>
            <person name="Khouri H.M."/>
            <person name="Qin H."/>
            <person name="Vamathevan J.J."/>
            <person name="Gill J."/>
            <person name="Scarlato V."/>
            <person name="Masignani V."/>
            <person name="Pizza M."/>
            <person name="Grandi G."/>
            <person name="Sun L."/>
            <person name="Smith H.O."/>
            <person name="Fraser C.M."/>
            <person name="Moxon E.R."/>
            <person name="Rappuoli R."/>
            <person name="Venter J.C."/>
        </authorList>
    </citation>
    <scope>NUCLEOTIDE SEQUENCE [LARGE SCALE GENOMIC DNA]</scope>
    <source>
        <strain>ATCC BAA-335 / MC58</strain>
    </source>
</reference>
<protein>
    <recommendedName>
        <fullName>Uncharacterized protein NMB0075</fullName>
    </recommendedName>
</protein>
<evidence type="ECO:0000255" key="1">
    <source>
        <dbReference type="PROSITE-ProRule" id="PRU00180"/>
    </source>
</evidence>
<evidence type="ECO:0000256" key="2">
    <source>
        <dbReference type="SAM" id="MobiDB-lite"/>
    </source>
</evidence>
<evidence type="ECO:0000305" key="3"/>